<proteinExistence type="inferred from homology"/>
<name>CH10_POLNS</name>
<comment type="function">
    <text evidence="1">Together with the chaperonin GroEL, plays an essential role in assisting protein folding. The GroEL-GroES system forms a nano-cage that allows encapsulation of the non-native substrate proteins and provides a physical environment optimized to promote and accelerate protein folding. GroES binds to the apical surface of the GroEL ring, thereby capping the opening of the GroEL channel.</text>
</comment>
<comment type="subunit">
    <text evidence="1">Heptamer of 7 subunits arranged in a ring. Interacts with the chaperonin GroEL.</text>
</comment>
<comment type="subcellular location">
    <subcellularLocation>
        <location evidence="1">Cytoplasm</location>
    </subcellularLocation>
</comment>
<comment type="similarity">
    <text evidence="1">Belongs to the GroES chaperonin family.</text>
</comment>
<evidence type="ECO:0000255" key="1">
    <source>
        <dbReference type="HAMAP-Rule" id="MF_00580"/>
    </source>
</evidence>
<feature type="chain" id="PRO_1000129689" description="Co-chaperonin GroES">
    <location>
        <begin position="1"/>
        <end position="96"/>
    </location>
</feature>
<reference key="1">
    <citation type="journal article" date="2013" name="Proc. Natl. Acad. Sci. U.S.A.">
        <title>Polynucleobacter necessarius, a model for genome reduction in both free-living and symbiotic bacteria.</title>
        <authorList>
            <person name="Boscaro V."/>
            <person name="Felletti M."/>
            <person name="Vannini C."/>
            <person name="Ackerman M.S."/>
            <person name="Chain P.S."/>
            <person name="Malfatti S."/>
            <person name="Vergez L.M."/>
            <person name="Shin M."/>
            <person name="Doak T.G."/>
            <person name="Lynch M."/>
            <person name="Petroni G."/>
        </authorList>
    </citation>
    <scope>NUCLEOTIDE SEQUENCE [LARGE SCALE GENOMIC DNA]</scope>
    <source>
        <strain>STIR1</strain>
    </source>
</reference>
<organism>
    <name type="scientific">Polynucleobacter necessarius subsp. necessarius (strain STIR1)</name>
    <dbReference type="NCBI Taxonomy" id="452638"/>
    <lineage>
        <taxon>Bacteria</taxon>
        <taxon>Pseudomonadati</taxon>
        <taxon>Pseudomonadota</taxon>
        <taxon>Betaproteobacteria</taxon>
        <taxon>Burkholderiales</taxon>
        <taxon>Burkholderiaceae</taxon>
        <taxon>Polynucleobacter</taxon>
    </lineage>
</organism>
<gene>
    <name evidence="1" type="primary">groES</name>
    <name evidence="1" type="synonym">groS</name>
    <name type="ordered locus">Pnec_1519</name>
</gene>
<protein>
    <recommendedName>
        <fullName evidence="1">Co-chaperonin GroES</fullName>
    </recommendedName>
    <alternativeName>
        <fullName evidence="1">10 kDa chaperonin</fullName>
    </alternativeName>
    <alternativeName>
        <fullName evidence="1">Chaperonin-10</fullName>
        <shortName evidence="1">Cpn10</shortName>
    </alternativeName>
</protein>
<dbReference type="EMBL" id="CP001010">
    <property type="protein sequence ID" value="ACB44607.1"/>
    <property type="molecule type" value="Genomic_DNA"/>
</dbReference>
<dbReference type="SMR" id="B1XRX2"/>
<dbReference type="STRING" id="452638.Pnec_1519"/>
<dbReference type="KEGG" id="pne:Pnec_1519"/>
<dbReference type="eggNOG" id="COG0234">
    <property type="taxonomic scope" value="Bacteria"/>
</dbReference>
<dbReference type="HOGENOM" id="CLU_132825_1_0_4"/>
<dbReference type="OrthoDB" id="9806791at2"/>
<dbReference type="GO" id="GO:0005737">
    <property type="term" value="C:cytoplasm"/>
    <property type="evidence" value="ECO:0007669"/>
    <property type="project" value="UniProtKB-SubCell"/>
</dbReference>
<dbReference type="GO" id="GO:0005524">
    <property type="term" value="F:ATP binding"/>
    <property type="evidence" value="ECO:0007669"/>
    <property type="project" value="InterPro"/>
</dbReference>
<dbReference type="GO" id="GO:0046872">
    <property type="term" value="F:metal ion binding"/>
    <property type="evidence" value="ECO:0007669"/>
    <property type="project" value="TreeGrafter"/>
</dbReference>
<dbReference type="GO" id="GO:0044183">
    <property type="term" value="F:protein folding chaperone"/>
    <property type="evidence" value="ECO:0007669"/>
    <property type="project" value="InterPro"/>
</dbReference>
<dbReference type="GO" id="GO:0051087">
    <property type="term" value="F:protein-folding chaperone binding"/>
    <property type="evidence" value="ECO:0007669"/>
    <property type="project" value="TreeGrafter"/>
</dbReference>
<dbReference type="GO" id="GO:0051082">
    <property type="term" value="F:unfolded protein binding"/>
    <property type="evidence" value="ECO:0007669"/>
    <property type="project" value="TreeGrafter"/>
</dbReference>
<dbReference type="GO" id="GO:0051085">
    <property type="term" value="P:chaperone cofactor-dependent protein refolding"/>
    <property type="evidence" value="ECO:0007669"/>
    <property type="project" value="TreeGrafter"/>
</dbReference>
<dbReference type="CDD" id="cd00320">
    <property type="entry name" value="cpn10"/>
    <property type="match status" value="1"/>
</dbReference>
<dbReference type="FunFam" id="2.30.33.40:FF:000001">
    <property type="entry name" value="10 kDa chaperonin"/>
    <property type="match status" value="1"/>
</dbReference>
<dbReference type="Gene3D" id="2.30.33.40">
    <property type="entry name" value="GroES chaperonin"/>
    <property type="match status" value="1"/>
</dbReference>
<dbReference type="HAMAP" id="MF_00580">
    <property type="entry name" value="CH10"/>
    <property type="match status" value="1"/>
</dbReference>
<dbReference type="InterPro" id="IPR020818">
    <property type="entry name" value="Chaperonin_GroES"/>
</dbReference>
<dbReference type="InterPro" id="IPR037124">
    <property type="entry name" value="Chaperonin_GroES_sf"/>
</dbReference>
<dbReference type="InterPro" id="IPR018369">
    <property type="entry name" value="Chaprnonin_Cpn10_CS"/>
</dbReference>
<dbReference type="InterPro" id="IPR011032">
    <property type="entry name" value="GroES-like_sf"/>
</dbReference>
<dbReference type="NCBIfam" id="NF001527">
    <property type="entry name" value="PRK00364.1-2"/>
    <property type="match status" value="1"/>
</dbReference>
<dbReference type="NCBIfam" id="NF001529">
    <property type="entry name" value="PRK00364.1-5"/>
    <property type="match status" value="1"/>
</dbReference>
<dbReference type="NCBIfam" id="NF001531">
    <property type="entry name" value="PRK00364.2-2"/>
    <property type="match status" value="1"/>
</dbReference>
<dbReference type="NCBIfam" id="NF001533">
    <property type="entry name" value="PRK00364.2-4"/>
    <property type="match status" value="1"/>
</dbReference>
<dbReference type="PANTHER" id="PTHR10772">
    <property type="entry name" value="10 KDA HEAT SHOCK PROTEIN"/>
    <property type="match status" value="1"/>
</dbReference>
<dbReference type="PANTHER" id="PTHR10772:SF58">
    <property type="entry name" value="CO-CHAPERONIN GROES"/>
    <property type="match status" value="1"/>
</dbReference>
<dbReference type="Pfam" id="PF00166">
    <property type="entry name" value="Cpn10"/>
    <property type="match status" value="1"/>
</dbReference>
<dbReference type="PRINTS" id="PR00297">
    <property type="entry name" value="CHAPERONIN10"/>
</dbReference>
<dbReference type="SMART" id="SM00883">
    <property type="entry name" value="Cpn10"/>
    <property type="match status" value="1"/>
</dbReference>
<dbReference type="SUPFAM" id="SSF50129">
    <property type="entry name" value="GroES-like"/>
    <property type="match status" value="1"/>
</dbReference>
<dbReference type="PROSITE" id="PS00681">
    <property type="entry name" value="CHAPERONINS_CPN10"/>
    <property type="match status" value="1"/>
</dbReference>
<accession>B1XRX2</accession>
<sequence length="96" mass="10437">MNLRPLHDRVIIKRLDQESKTASGIIIPDAAAEKPDQGEVLAVGPGKRDDGGKLNAPDVKVGDRVLFGKYAGQTVKVDSEELIVMREDDIMAVVQK</sequence>
<keyword id="KW-0143">Chaperone</keyword>
<keyword id="KW-0963">Cytoplasm</keyword>